<comment type="similarity">
    <text evidence="1">Belongs to the UPF0597 family.</text>
</comment>
<proteinExistence type="inferred from homology"/>
<accession>Q3YXB9</accession>
<reference key="1">
    <citation type="journal article" date="2005" name="Nucleic Acids Res.">
        <title>Genome dynamics and diversity of Shigella species, the etiologic agents of bacillary dysentery.</title>
        <authorList>
            <person name="Yang F."/>
            <person name="Yang J."/>
            <person name="Zhang X."/>
            <person name="Chen L."/>
            <person name="Jiang Y."/>
            <person name="Yan Y."/>
            <person name="Tang X."/>
            <person name="Wang J."/>
            <person name="Xiong Z."/>
            <person name="Dong J."/>
            <person name="Xue Y."/>
            <person name="Zhu Y."/>
            <person name="Xu X."/>
            <person name="Sun L."/>
            <person name="Chen S."/>
            <person name="Nie H."/>
            <person name="Peng J."/>
            <person name="Xu J."/>
            <person name="Wang Y."/>
            <person name="Yuan Z."/>
            <person name="Wen Y."/>
            <person name="Yao Z."/>
            <person name="Shen Y."/>
            <person name="Qiang B."/>
            <person name="Hou Y."/>
            <person name="Yu J."/>
            <person name="Jin Q."/>
        </authorList>
    </citation>
    <scope>NUCLEOTIDE SEQUENCE [LARGE SCALE GENOMIC DNA]</scope>
    <source>
        <strain>Ss046</strain>
    </source>
</reference>
<keyword id="KW-1185">Reference proteome</keyword>
<sequence length="436" mass="45378">MFDSTLNPLWQRYILAVQEEVKPALGCTEPISLALAAAVAAAELEGPVERVEAWVSPNLMKNGLGVTVPGTGMVGLPIAAALGALGGNANAGLEVLKDATAQAIADAKALLAAGKVSVKIQEPCNEILFSRAKVWNGEKWACVTIVGGHTNIVRIETHNGVVFTQQACVAEGEQESPLTVLSRTTLAEILKFVNEVPFAAIRFILDSAKLNCALSQEGLSGKWGLHIGATLEKQCERGLLAKDLSSSIVIRTSAASDARMGGATLPAMSNSGSGNQGITATMPVVVVAEHFGADDERLARALMLSHLSAIYIHNQLPRLSALCAATTAAMGAAAGMAWLVDGRYETISMAISSMIGDVSGMICDGASNSCAMKVSTSASAAWKAVLMALDDTAVTGNEGIVAHDVEQSIANLCALASHSMQQTDRQIIEIMASKAR</sequence>
<name>YHAM_SHISS</name>
<evidence type="ECO:0000255" key="1">
    <source>
        <dbReference type="HAMAP-Rule" id="MF_01845"/>
    </source>
</evidence>
<dbReference type="EMBL" id="CP000038">
    <property type="protein sequence ID" value="AAZ89843.1"/>
    <property type="molecule type" value="Genomic_DNA"/>
</dbReference>
<dbReference type="KEGG" id="ssn:SSON_3267"/>
<dbReference type="HOGENOM" id="CLU_051840_0_0_6"/>
<dbReference type="Proteomes" id="UP000002529">
    <property type="component" value="Chromosome"/>
</dbReference>
<dbReference type="GO" id="GO:0080146">
    <property type="term" value="F:L-cysteine desulfhydrase activity"/>
    <property type="evidence" value="ECO:0007669"/>
    <property type="project" value="TreeGrafter"/>
</dbReference>
<dbReference type="GO" id="GO:0019450">
    <property type="term" value="P:L-cysteine catabolic process to pyruvate"/>
    <property type="evidence" value="ECO:0007669"/>
    <property type="project" value="TreeGrafter"/>
</dbReference>
<dbReference type="HAMAP" id="MF_01845">
    <property type="entry name" value="UPF0597"/>
    <property type="match status" value="1"/>
</dbReference>
<dbReference type="InterPro" id="IPR005130">
    <property type="entry name" value="Ser_deHydtase-like_asu"/>
</dbReference>
<dbReference type="InterPro" id="IPR021144">
    <property type="entry name" value="UPF0597"/>
</dbReference>
<dbReference type="PANTHER" id="PTHR30501">
    <property type="entry name" value="UPF0597 PROTEIN YHAM"/>
    <property type="match status" value="1"/>
</dbReference>
<dbReference type="PANTHER" id="PTHR30501:SF2">
    <property type="entry name" value="UPF0597 PROTEIN YHAM"/>
    <property type="match status" value="1"/>
</dbReference>
<dbReference type="Pfam" id="PF03313">
    <property type="entry name" value="SDH_alpha"/>
    <property type="match status" value="1"/>
</dbReference>
<dbReference type="PIRSF" id="PIRSF006054">
    <property type="entry name" value="UCP006054"/>
    <property type="match status" value="1"/>
</dbReference>
<organism>
    <name type="scientific">Shigella sonnei (strain Ss046)</name>
    <dbReference type="NCBI Taxonomy" id="300269"/>
    <lineage>
        <taxon>Bacteria</taxon>
        <taxon>Pseudomonadati</taxon>
        <taxon>Pseudomonadota</taxon>
        <taxon>Gammaproteobacteria</taxon>
        <taxon>Enterobacterales</taxon>
        <taxon>Enterobacteriaceae</taxon>
        <taxon>Shigella</taxon>
    </lineage>
</organism>
<protein>
    <recommendedName>
        <fullName evidence="1">UPF0597 protein YhaM</fullName>
    </recommendedName>
</protein>
<feature type="chain" id="PRO_0000339861" description="UPF0597 protein YhaM">
    <location>
        <begin position="1"/>
        <end position="436"/>
    </location>
</feature>
<gene>
    <name evidence="1" type="primary">yhaM</name>
    <name type="ordered locus">SSON_3267</name>
</gene>